<feature type="chain" id="PRO_1000008277" description="Translation initiation factor IF-2">
    <location>
        <begin position="1"/>
        <end position="903"/>
    </location>
</feature>
<feature type="domain" description="tr-type G">
    <location>
        <begin position="403"/>
        <end position="572"/>
    </location>
</feature>
<feature type="region of interest" description="Disordered" evidence="3">
    <location>
        <begin position="66"/>
        <end position="296"/>
    </location>
</feature>
<feature type="region of interest" description="G1" evidence="1">
    <location>
        <begin position="412"/>
        <end position="419"/>
    </location>
</feature>
<feature type="region of interest" description="G2" evidence="1">
    <location>
        <begin position="437"/>
        <end position="441"/>
    </location>
</feature>
<feature type="region of interest" description="G3" evidence="1">
    <location>
        <begin position="458"/>
        <end position="461"/>
    </location>
</feature>
<feature type="region of interest" description="G4" evidence="1">
    <location>
        <begin position="512"/>
        <end position="515"/>
    </location>
</feature>
<feature type="region of interest" description="G5" evidence="1">
    <location>
        <begin position="548"/>
        <end position="550"/>
    </location>
</feature>
<feature type="compositionally biased region" description="Basic and acidic residues" evidence="3">
    <location>
        <begin position="121"/>
        <end position="132"/>
    </location>
</feature>
<feature type="compositionally biased region" description="Low complexity" evidence="3">
    <location>
        <begin position="139"/>
        <end position="152"/>
    </location>
</feature>
<feature type="compositionally biased region" description="Low complexity" evidence="3">
    <location>
        <begin position="178"/>
        <end position="195"/>
    </location>
</feature>
<feature type="compositionally biased region" description="Basic and acidic residues" evidence="3">
    <location>
        <begin position="204"/>
        <end position="231"/>
    </location>
</feature>
<feature type="compositionally biased region" description="Basic residues" evidence="3">
    <location>
        <begin position="246"/>
        <end position="255"/>
    </location>
</feature>
<feature type="compositionally biased region" description="Basic and acidic residues" evidence="3">
    <location>
        <begin position="263"/>
        <end position="276"/>
    </location>
</feature>
<feature type="compositionally biased region" description="Basic and acidic residues" evidence="3">
    <location>
        <begin position="285"/>
        <end position="296"/>
    </location>
</feature>
<feature type="binding site" evidence="2">
    <location>
        <begin position="412"/>
        <end position="419"/>
    </location>
    <ligand>
        <name>GTP</name>
        <dbReference type="ChEBI" id="CHEBI:37565"/>
    </ligand>
</feature>
<feature type="binding site" evidence="2">
    <location>
        <begin position="458"/>
        <end position="462"/>
    </location>
    <ligand>
        <name>GTP</name>
        <dbReference type="ChEBI" id="CHEBI:37565"/>
    </ligand>
</feature>
<feature type="binding site" evidence="2">
    <location>
        <begin position="512"/>
        <end position="515"/>
    </location>
    <ligand>
        <name>GTP</name>
        <dbReference type="ChEBI" id="CHEBI:37565"/>
    </ligand>
</feature>
<name>IF2_MOOTA</name>
<sequence length="903" mass="98208">MAKTRVYELAKELKVTNKDLIDTMARLGIYTRSHMSVLENGEVIKVRNHYRQQWRAAKLARMHREQATLKGEGPVPTRGVPDAPRAEEVPSRQVPAPETGAPAQATGATRQPATGSARPANTDETRVQEHKPATAARQAGDAPAAEGTAAAGQPLDGKELRQAVANGQGTEEPRQQPAATGQRAQGGEAGRGQQSRQKKKRRGEGRSRQDENKGSAREDQANRFATRDKEAAPSAGQQSPAEKGQRRPAHSKPLRIPKPPEAVTKDLPEKRRDRSNARPGAKPAESGRSRKREMENQLEERLMRRDKNKGKAQKHKETPKVVFKITLTGSITVQELAKRIGKTAAEVIKYLMGQGIMATINQELDLETAALVAQDLGAIVEIKAEKPITELEDLVDPPETLRERPPVVTVMGHVDHGKTSLLDAIRRTNVTASEAGGITQHIGAYQVRLKNRKITFLDTPGHAAFTAMRARGAQATDIAILVVAADDGVMPQTIEAINHAKAAGVPIVVAINKIDRPEANPERVKQQLTEYGLVPEEWGGDTIMVPVSAVTKEGINDLLEMVLLTADVAELKANPDRPARGIVIEAKLDRGRGPVATMLVQKGTLKIGDNLVAGSVYGRVRAMIDDRGERVNSAPPSTPVEVLGLSELPEAGDIFQVVEDEKLARQIASSRQEEKRQEELKAASKTTLDDLFKQMEAGEVKELNLVIKGDVQGSVEALRGALEQLSTSEVKVNLLHGGVGAITETDVMLAAASKAIIIGFNVRPEANVRKAAEEAGVEIRLYRVIYEVIDDVKAAMSGLLEPEEREVILGRAEVRATFKVPKAGTVAGCFVTEGKIQNRALARVIRDGVVVFEGRIESLKRFKDDVREVAQGYECGVGLEKFNDIKEGDVIEAYTIEEIQREL</sequence>
<gene>
    <name evidence="2" type="primary">infB</name>
    <name type="ordered locus">Moth_1050</name>
</gene>
<protein>
    <recommendedName>
        <fullName evidence="2">Translation initiation factor IF-2</fullName>
    </recommendedName>
</protein>
<accession>Q2RJM5</accession>
<comment type="function">
    <text evidence="2">One of the essential components for the initiation of protein synthesis. Protects formylmethionyl-tRNA from spontaneous hydrolysis and promotes its binding to the 30S ribosomal subunits. Also involved in the hydrolysis of GTP during the formation of the 70S ribosomal complex.</text>
</comment>
<comment type="subcellular location">
    <subcellularLocation>
        <location evidence="2">Cytoplasm</location>
    </subcellularLocation>
</comment>
<comment type="similarity">
    <text evidence="2">Belongs to the TRAFAC class translation factor GTPase superfamily. Classic translation factor GTPase family. IF-2 subfamily.</text>
</comment>
<dbReference type="EMBL" id="CP000232">
    <property type="protein sequence ID" value="ABC19364.1"/>
    <property type="molecule type" value="Genomic_DNA"/>
</dbReference>
<dbReference type="RefSeq" id="YP_429907.1">
    <property type="nucleotide sequence ID" value="NC_007644.1"/>
</dbReference>
<dbReference type="SMR" id="Q2RJM5"/>
<dbReference type="STRING" id="264732.Moth_1050"/>
<dbReference type="EnsemblBacteria" id="ABC19364">
    <property type="protein sequence ID" value="ABC19364"/>
    <property type="gene ID" value="Moth_1050"/>
</dbReference>
<dbReference type="KEGG" id="mta:Moth_1050"/>
<dbReference type="PATRIC" id="fig|264732.11.peg.1130"/>
<dbReference type="eggNOG" id="COG0532">
    <property type="taxonomic scope" value="Bacteria"/>
</dbReference>
<dbReference type="eggNOG" id="COG3170">
    <property type="taxonomic scope" value="Bacteria"/>
</dbReference>
<dbReference type="HOGENOM" id="CLU_006301_5_1_9"/>
<dbReference type="OrthoDB" id="9811804at2"/>
<dbReference type="GO" id="GO:0005829">
    <property type="term" value="C:cytosol"/>
    <property type="evidence" value="ECO:0007669"/>
    <property type="project" value="TreeGrafter"/>
</dbReference>
<dbReference type="GO" id="GO:0005525">
    <property type="term" value="F:GTP binding"/>
    <property type="evidence" value="ECO:0007669"/>
    <property type="project" value="UniProtKB-KW"/>
</dbReference>
<dbReference type="GO" id="GO:0003924">
    <property type="term" value="F:GTPase activity"/>
    <property type="evidence" value="ECO:0007669"/>
    <property type="project" value="UniProtKB-UniRule"/>
</dbReference>
<dbReference type="GO" id="GO:0003743">
    <property type="term" value="F:translation initiation factor activity"/>
    <property type="evidence" value="ECO:0007669"/>
    <property type="project" value="UniProtKB-UniRule"/>
</dbReference>
<dbReference type="CDD" id="cd01887">
    <property type="entry name" value="IF2_eIF5B"/>
    <property type="match status" value="1"/>
</dbReference>
<dbReference type="CDD" id="cd03702">
    <property type="entry name" value="IF2_mtIF2_II"/>
    <property type="match status" value="1"/>
</dbReference>
<dbReference type="CDD" id="cd03692">
    <property type="entry name" value="mtIF2_IVc"/>
    <property type="match status" value="1"/>
</dbReference>
<dbReference type="FunFam" id="2.40.30.10:FF:000007">
    <property type="entry name" value="Translation initiation factor IF-2"/>
    <property type="match status" value="1"/>
</dbReference>
<dbReference type="FunFam" id="2.40.30.10:FF:000008">
    <property type="entry name" value="Translation initiation factor IF-2"/>
    <property type="match status" value="1"/>
</dbReference>
<dbReference type="FunFam" id="3.40.50.10050:FF:000001">
    <property type="entry name" value="Translation initiation factor IF-2"/>
    <property type="match status" value="1"/>
</dbReference>
<dbReference type="FunFam" id="3.40.50.300:FF:000019">
    <property type="entry name" value="Translation initiation factor IF-2"/>
    <property type="match status" value="1"/>
</dbReference>
<dbReference type="Gene3D" id="1.10.10.2480">
    <property type="match status" value="1"/>
</dbReference>
<dbReference type="Gene3D" id="3.40.50.300">
    <property type="entry name" value="P-loop containing nucleotide triphosphate hydrolases"/>
    <property type="match status" value="1"/>
</dbReference>
<dbReference type="Gene3D" id="2.40.30.10">
    <property type="entry name" value="Translation factors"/>
    <property type="match status" value="2"/>
</dbReference>
<dbReference type="Gene3D" id="3.40.50.10050">
    <property type="entry name" value="Translation initiation factor IF- 2, domain 3"/>
    <property type="match status" value="1"/>
</dbReference>
<dbReference type="HAMAP" id="MF_00100_B">
    <property type="entry name" value="IF_2_B"/>
    <property type="match status" value="1"/>
</dbReference>
<dbReference type="InterPro" id="IPR053905">
    <property type="entry name" value="EF-G-like_DII"/>
</dbReference>
<dbReference type="InterPro" id="IPR044145">
    <property type="entry name" value="IF2_II"/>
</dbReference>
<dbReference type="InterPro" id="IPR006847">
    <property type="entry name" value="IF2_N"/>
</dbReference>
<dbReference type="InterPro" id="IPR027417">
    <property type="entry name" value="P-loop_NTPase"/>
</dbReference>
<dbReference type="InterPro" id="IPR005225">
    <property type="entry name" value="Small_GTP-bd"/>
</dbReference>
<dbReference type="InterPro" id="IPR000795">
    <property type="entry name" value="T_Tr_GTP-bd_dom"/>
</dbReference>
<dbReference type="InterPro" id="IPR000178">
    <property type="entry name" value="TF_IF2_bacterial-like"/>
</dbReference>
<dbReference type="InterPro" id="IPR015760">
    <property type="entry name" value="TIF_IF2"/>
</dbReference>
<dbReference type="InterPro" id="IPR023115">
    <property type="entry name" value="TIF_IF2_dom3"/>
</dbReference>
<dbReference type="InterPro" id="IPR036925">
    <property type="entry name" value="TIF_IF2_dom3_sf"/>
</dbReference>
<dbReference type="InterPro" id="IPR009000">
    <property type="entry name" value="Transl_B-barrel_sf"/>
</dbReference>
<dbReference type="NCBIfam" id="TIGR00487">
    <property type="entry name" value="IF-2"/>
    <property type="match status" value="1"/>
</dbReference>
<dbReference type="NCBIfam" id="TIGR00231">
    <property type="entry name" value="small_GTP"/>
    <property type="match status" value="1"/>
</dbReference>
<dbReference type="PANTHER" id="PTHR43381:SF5">
    <property type="entry name" value="TR-TYPE G DOMAIN-CONTAINING PROTEIN"/>
    <property type="match status" value="1"/>
</dbReference>
<dbReference type="PANTHER" id="PTHR43381">
    <property type="entry name" value="TRANSLATION INITIATION FACTOR IF-2-RELATED"/>
    <property type="match status" value="1"/>
</dbReference>
<dbReference type="Pfam" id="PF22042">
    <property type="entry name" value="EF-G_D2"/>
    <property type="match status" value="1"/>
</dbReference>
<dbReference type="Pfam" id="PF00009">
    <property type="entry name" value="GTP_EFTU"/>
    <property type="match status" value="1"/>
</dbReference>
<dbReference type="Pfam" id="PF11987">
    <property type="entry name" value="IF-2"/>
    <property type="match status" value="1"/>
</dbReference>
<dbReference type="Pfam" id="PF04760">
    <property type="entry name" value="IF2_N"/>
    <property type="match status" value="2"/>
</dbReference>
<dbReference type="SUPFAM" id="SSF52156">
    <property type="entry name" value="Initiation factor IF2/eIF5b, domain 3"/>
    <property type="match status" value="1"/>
</dbReference>
<dbReference type="SUPFAM" id="SSF52540">
    <property type="entry name" value="P-loop containing nucleoside triphosphate hydrolases"/>
    <property type="match status" value="1"/>
</dbReference>
<dbReference type="SUPFAM" id="SSF50447">
    <property type="entry name" value="Translation proteins"/>
    <property type="match status" value="2"/>
</dbReference>
<dbReference type="PROSITE" id="PS51722">
    <property type="entry name" value="G_TR_2"/>
    <property type="match status" value="1"/>
</dbReference>
<dbReference type="PROSITE" id="PS01176">
    <property type="entry name" value="IF2"/>
    <property type="match status" value="1"/>
</dbReference>
<organism>
    <name type="scientific">Moorella thermoacetica (strain ATCC 39073 / JCM 9320)</name>
    <dbReference type="NCBI Taxonomy" id="264732"/>
    <lineage>
        <taxon>Bacteria</taxon>
        <taxon>Bacillati</taxon>
        <taxon>Bacillota</taxon>
        <taxon>Clostridia</taxon>
        <taxon>Moorellales</taxon>
        <taxon>Moorellaceae</taxon>
        <taxon>Moorella</taxon>
    </lineage>
</organism>
<reference key="1">
    <citation type="journal article" date="2008" name="Environ. Microbiol.">
        <title>The complete genome sequence of Moorella thermoacetica (f. Clostridium thermoaceticum).</title>
        <authorList>
            <person name="Pierce E."/>
            <person name="Xie G."/>
            <person name="Barabote R.D."/>
            <person name="Saunders E."/>
            <person name="Han C.S."/>
            <person name="Detter J.C."/>
            <person name="Richardson P."/>
            <person name="Brettin T.S."/>
            <person name="Das A."/>
            <person name="Ljungdahl L.G."/>
            <person name="Ragsdale S.W."/>
        </authorList>
    </citation>
    <scope>NUCLEOTIDE SEQUENCE [LARGE SCALE GENOMIC DNA]</scope>
    <source>
        <strain>ATCC 39073 / JCM 9320</strain>
    </source>
</reference>
<proteinExistence type="inferred from homology"/>
<keyword id="KW-0963">Cytoplasm</keyword>
<keyword id="KW-0342">GTP-binding</keyword>
<keyword id="KW-0396">Initiation factor</keyword>
<keyword id="KW-0547">Nucleotide-binding</keyword>
<keyword id="KW-0648">Protein biosynthesis</keyword>
<evidence type="ECO:0000250" key="1"/>
<evidence type="ECO:0000255" key="2">
    <source>
        <dbReference type="HAMAP-Rule" id="MF_00100"/>
    </source>
</evidence>
<evidence type="ECO:0000256" key="3">
    <source>
        <dbReference type="SAM" id="MobiDB-lite"/>
    </source>
</evidence>